<sequence length="112" mass="12820">MTDPRETVPPGNSGEETIEEAFAWLDRTVEAINREAVNHLPRELIFQVWQRSWRYWHDEQGMSQSYTKYRYLCLMQKAVFIHFKRGCTCLGGGHGPGGWRPGPPPPPPPGLV</sequence>
<gene>
    <name type="primary">vpx</name>
</gene>
<evidence type="ECO:0000250" key="1"/>
<evidence type="ECO:0000250" key="2">
    <source>
        <dbReference type="UniProtKB" id="P12454"/>
    </source>
</evidence>
<evidence type="ECO:0000250" key="3">
    <source>
        <dbReference type="UniProtKB" id="P18099"/>
    </source>
</evidence>
<evidence type="ECO:0000250" key="4">
    <source>
        <dbReference type="UniProtKB" id="P19508"/>
    </source>
</evidence>
<evidence type="ECO:0000305" key="5"/>
<dbReference type="EMBL" id="D00835">
    <property type="protein sequence ID" value="BAA00712.1"/>
    <property type="molecule type" value="Genomic_DNA"/>
</dbReference>
<dbReference type="PIR" id="D38475">
    <property type="entry name" value="ASLJCX"/>
</dbReference>
<dbReference type="SMR" id="P24110"/>
<dbReference type="Proteomes" id="UP000007421">
    <property type="component" value="Segment"/>
</dbReference>
<dbReference type="GO" id="GO:0042025">
    <property type="term" value="C:host cell nucleus"/>
    <property type="evidence" value="ECO:0007669"/>
    <property type="project" value="UniProtKB-SubCell"/>
</dbReference>
<dbReference type="GO" id="GO:0044423">
    <property type="term" value="C:virion component"/>
    <property type="evidence" value="ECO:0007669"/>
    <property type="project" value="UniProtKB-KW"/>
</dbReference>
<dbReference type="GO" id="GO:0052170">
    <property type="term" value="P:symbiont-mediated suppression of host innate immune response"/>
    <property type="evidence" value="ECO:0007669"/>
    <property type="project" value="UniProtKB-KW"/>
</dbReference>
<dbReference type="GO" id="GO:0019058">
    <property type="term" value="P:viral life cycle"/>
    <property type="evidence" value="ECO:0007669"/>
    <property type="project" value="InterPro"/>
</dbReference>
<dbReference type="Gene3D" id="1.20.5.4730">
    <property type="match status" value="1"/>
</dbReference>
<dbReference type="InterPro" id="IPR053711">
    <property type="entry name" value="Lentiviral_Vpx_assoc_factor"/>
</dbReference>
<dbReference type="InterPro" id="IPR000012">
    <property type="entry name" value="RetroV_VpR/X"/>
</dbReference>
<dbReference type="Pfam" id="PF00522">
    <property type="entry name" value="VPR"/>
    <property type="match status" value="1"/>
</dbReference>
<keyword id="KW-0014">AIDS</keyword>
<keyword id="KW-1048">Host nucleus</keyword>
<keyword id="KW-0945">Host-virus interaction</keyword>
<keyword id="KW-1090">Inhibition of host innate immune response by virus</keyword>
<keyword id="KW-0899">Viral immunoevasion</keyword>
<keyword id="KW-0946">Virion</keyword>
<accession>P24110</accession>
<comment type="function">
    <text evidence="1">Plays a role in nuclear translocation of the viral pre-integration complex (PIC), thus is required for the virus to infect non-dividing cells. Targets specific host proteins for degradation by the 26S proteasome. Acts by associating with the cellular CUL4A-DDB1 E3 ligase complex through direct interaction with host VPRPB/DCAF-1. This change in the E3 ligase substrate specificity results in the degradation of host SAMHD1. In turn, SAMHD1 depletion allows viral replication in host myeloid cells by preventing SAMHD1-mediated hydrolysis of intracellular dNTPs necessary for reverse transcription (By similarity).</text>
</comment>
<comment type="subunit">
    <text evidence="1 2 3">Interacts with the P6 region of unprocessed GAG (By similarity). Interacts with host VPRBP/DCAF1, leading to change substrate specificity of the CUL4A-DDB1 E3 ligase complex (By similarity). Interacts with host NUP153 (By similarity).</text>
</comment>
<comment type="subcellular location">
    <subcellularLocation>
        <location>Virion</location>
    </subcellularLocation>
    <subcellularLocation>
        <location>Host nucleus</location>
    </subcellularLocation>
    <text evidence="1">Nuclear just after virion uncoating, or if expressed in the absence of unprocessed GAG.</text>
</comment>
<comment type="similarity">
    <text evidence="5">Belongs to the lentivirus VPX protein family.</text>
</comment>
<feature type="chain" id="PRO_0000085391" description="Protein Vpx">
    <location>
        <begin position="1"/>
        <end position="112"/>
    </location>
</feature>
<feature type="region of interest" description="Binds to human NUP153" evidence="4">
    <location>
        <begin position="61"/>
        <end position="80"/>
    </location>
</feature>
<feature type="short sequence motif" description="Nuclear localization signal" evidence="1">
    <location>
        <begin position="65"/>
        <end position="72"/>
    </location>
</feature>
<name>VPX_HV2CA</name>
<organism>
    <name type="scientific">Human immunodeficiency virus type 2 subtype A (isolate CAM2)</name>
    <name type="common">HIV-2</name>
    <dbReference type="NCBI Taxonomy" id="11715"/>
    <lineage>
        <taxon>Viruses</taxon>
        <taxon>Riboviria</taxon>
        <taxon>Pararnavirae</taxon>
        <taxon>Artverviricota</taxon>
        <taxon>Revtraviricetes</taxon>
        <taxon>Ortervirales</taxon>
        <taxon>Retroviridae</taxon>
        <taxon>Orthoretrovirinae</taxon>
        <taxon>Lentivirus</taxon>
        <taxon>Human immunodeficiency virus 2</taxon>
    </lineage>
</organism>
<protein>
    <recommendedName>
        <fullName>Protein Vpx</fullName>
    </recommendedName>
    <alternativeName>
        <fullName>Viral protein X</fullName>
    </alternativeName>
    <alternativeName>
        <fullName>X ORF protein</fullName>
    </alternativeName>
</protein>
<reference key="1">
    <citation type="journal article" date="1991" name="J. Gen. Virol.">
        <title>Nucleotide sequence of a Guinea-Bissau-derived human immunodeficiency virus type 2 proviral clone (HIV-2CAM2).</title>
        <authorList>
            <person name="Tristem M."/>
            <person name="Hill F."/>
            <person name="Karpas A."/>
        </authorList>
    </citation>
    <scope>NUCLEOTIDE SEQUENCE [GENOMIC DNA]</scope>
</reference>
<proteinExistence type="inferred from homology"/>
<organismHost>
    <name type="scientific">Homo sapiens</name>
    <name type="common">Human</name>
    <dbReference type="NCBI Taxonomy" id="9606"/>
</organismHost>